<protein>
    <recommendedName>
        <fullName evidence="1">Acetate kinase 2</fullName>
        <ecNumber evidence="1">2.7.2.1</ecNumber>
    </recommendedName>
    <alternativeName>
        <fullName evidence="1">Acetokinase 2</fullName>
    </alternativeName>
</protein>
<dbReference type="EC" id="2.7.2.1" evidence="1"/>
<dbReference type="EMBL" id="AE017262">
    <property type="protein sequence ID" value="AAT04378.1"/>
    <property type="molecule type" value="Genomic_DNA"/>
</dbReference>
<dbReference type="RefSeq" id="WP_003741223.1">
    <property type="nucleotide sequence ID" value="NC_002973.6"/>
</dbReference>
<dbReference type="SMR" id="Q71Z86"/>
<dbReference type="KEGG" id="lmf:LMOf2365_1603"/>
<dbReference type="HOGENOM" id="CLU_020352_0_1_9"/>
<dbReference type="UniPathway" id="UPA00340">
    <property type="reaction ID" value="UER00458"/>
</dbReference>
<dbReference type="GO" id="GO:0005737">
    <property type="term" value="C:cytoplasm"/>
    <property type="evidence" value="ECO:0007669"/>
    <property type="project" value="UniProtKB-SubCell"/>
</dbReference>
<dbReference type="GO" id="GO:0008776">
    <property type="term" value="F:acetate kinase activity"/>
    <property type="evidence" value="ECO:0007669"/>
    <property type="project" value="UniProtKB-UniRule"/>
</dbReference>
<dbReference type="GO" id="GO:0005524">
    <property type="term" value="F:ATP binding"/>
    <property type="evidence" value="ECO:0007669"/>
    <property type="project" value="UniProtKB-KW"/>
</dbReference>
<dbReference type="GO" id="GO:0000287">
    <property type="term" value="F:magnesium ion binding"/>
    <property type="evidence" value="ECO:0007669"/>
    <property type="project" value="UniProtKB-UniRule"/>
</dbReference>
<dbReference type="GO" id="GO:0006083">
    <property type="term" value="P:acetate metabolic process"/>
    <property type="evidence" value="ECO:0007669"/>
    <property type="project" value="TreeGrafter"/>
</dbReference>
<dbReference type="GO" id="GO:0006085">
    <property type="term" value="P:acetyl-CoA biosynthetic process"/>
    <property type="evidence" value="ECO:0007669"/>
    <property type="project" value="UniProtKB-UniRule"/>
</dbReference>
<dbReference type="CDD" id="cd24010">
    <property type="entry name" value="ASKHA_NBD_AcK_PK"/>
    <property type="match status" value="1"/>
</dbReference>
<dbReference type="Gene3D" id="3.30.420.40">
    <property type="match status" value="2"/>
</dbReference>
<dbReference type="HAMAP" id="MF_00020">
    <property type="entry name" value="Acetate_kinase"/>
    <property type="match status" value="1"/>
</dbReference>
<dbReference type="InterPro" id="IPR004372">
    <property type="entry name" value="Ac/propionate_kinase"/>
</dbReference>
<dbReference type="InterPro" id="IPR000890">
    <property type="entry name" value="Aliphatic_acid_kin_short-chain"/>
</dbReference>
<dbReference type="InterPro" id="IPR023865">
    <property type="entry name" value="Aliphatic_acid_kinase_CS"/>
</dbReference>
<dbReference type="InterPro" id="IPR043129">
    <property type="entry name" value="ATPase_NBD"/>
</dbReference>
<dbReference type="NCBIfam" id="TIGR00016">
    <property type="entry name" value="ackA"/>
    <property type="match status" value="1"/>
</dbReference>
<dbReference type="PANTHER" id="PTHR21060">
    <property type="entry name" value="ACETATE KINASE"/>
    <property type="match status" value="1"/>
</dbReference>
<dbReference type="PANTHER" id="PTHR21060:SF15">
    <property type="entry name" value="ACETATE KINASE-RELATED"/>
    <property type="match status" value="1"/>
</dbReference>
<dbReference type="Pfam" id="PF00871">
    <property type="entry name" value="Acetate_kinase"/>
    <property type="match status" value="1"/>
</dbReference>
<dbReference type="PIRSF" id="PIRSF000722">
    <property type="entry name" value="Acetate_prop_kin"/>
    <property type="match status" value="1"/>
</dbReference>
<dbReference type="PRINTS" id="PR00471">
    <property type="entry name" value="ACETATEKNASE"/>
</dbReference>
<dbReference type="SUPFAM" id="SSF53067">
    <property type="entry name" value="Actin-like ATPase domain"/>
    <property type="match status" value="2"/>
</dbReference>
<dbReference type="PROSITE" id="PS01075">
    <property type="entry name" value="ACETATE_KINASE_1"/>
    <property type="match status" value="1"/>
</dbReference>
<dbReference type="PROSITE" id="PS01076">
    <property type="entry name" value="ACETATE_KINASE_2"/>
    <property type="match status" value="1"/>
</dbReference>
<reference key="1">
    <citation type="journal article" date="2004" name="Nucleic Acids Res.">
        <title>Whole genome comparisons of serotype 4b and 1/2a strains of the food-borne pathogen Listeria monocytogenes reveal new insights into the core genome components of this species.</title>
        <authorList>
            <person name="Nelson K.E."/>
            <person name="Fouts D.E."/>
            <person name="Mongodin E.F."/>
            <person name="Ravel J."/>
            <person name="DeBoy R.T."/>
            <person name="Kolonay J.F."/>
            <person name="Rasko D.A."/>
            <person name="Angiuoli S.V."/>
            <person name="Gill S.R."/>
            <person name="Paulsen I.T."/>
            <person name="Peterson J.D."/>
            <person name="White O."/>
            <person name="Nelson W.C."/>
            <person name="Nierman W.C."/>
            <person name="Beanan M.J."/>
            <person name="Brinkac L.M."/>
            <person name="Daugherty S.C."/>
            <person name="Dodson R.J."/>
            <person name="Durkin A.S."/>
            <person name="Madupu R."/>
            <person name="Haft D.H."/>
            <person name="Selengut J."/>
            <person name="Van Aken S.E."/>
            <person name="Khouri H.M."/>
            <person name="Fedorova N."/>
            <person name="Forberger H.A."/>
            <person name="Tran B."/>
            <person name="Kathariou S."/>
            <person name="Wonderling L.D."/>
            <person name="Uhlich G.A."/>
            <person name="Bayles D.O."/>
            <person name="Luchansky J.B."/>
            <person name="Fraser C.M."/>
        </authorList>
    </citation>
    <scope>NUCLEOTIDE SEQUENCE [LARGE SCALE GENOMIC DNA]</scope>
    <source>
        <strain>F2365</strain>
    </source>
</reference>
<proteinExistence type="inferred from homology"/>
<comment type="function">
    <text evidence="1">Catalyzes the formation of acetyl phosphate from acetate and ATP. Can also catalyze the reverse reaction.</text>
</comment>
<comment type="catalytic activity">
    <reaction evidence="1">
        <text>acetate + ATP = acetyl phosphate + ADP</text>
        <dbReference type="Rhea" id="RHEA:11352"/>
        <dbReference type="ChEBI" id="CHEBI:22191"/>
        <dbReference type="ChEBI" id="CHEBI:30089"/>
        <dbReference type="ChEBI" id="CHEBI:30616"/>
        <dbReference type="ChEBI" id="CHEBI:456216"/>
        <dbReference type="EC" id="2.7.2.1"/>
    </reaction>
</comment>
<comment type="cofactor">
    <cofactor evidence="1">
        <name>Mg(2+)</name>
        <dbReference type="ChEBI" id="CHEBI:18420"/>
    </cofactor>
    <cofactor evidence="1">
        <name>Mn(2+)</name>
        <dbReference type="ChEBI" id="CHEBI:29035"/>
    </cofactor>
    <text evidence="1">Mg(2+). Can also accept Mn(2+).</text>
</comment>
<comment type="pathway">
    <text evidence="1">Metabolic intermediate biosynthesis; acetyl-CoA biosynthesis; acetyl-CoA from acetate: step 1/2.</text>
</comment>
<comment type="subunit">
    <text evidence="1">Homodimer.</text>
</comment>
<comment type="subcellular location">
    <subcellularLocation>
        <location evidence="1">Cytoplasm</location>
    </subcellularLocation>
</comment>
<comment type="similarity">
    <text evidence="1">Belongs to the acetokinase family.</text>
</comment>
<feature type="chain" id="PRO_0000107578" description="Acetate kinase 2">
    <location>
        <begin position="1"/>
        <end position="397"/>
    </location>
</feature>
<feature type="active site" description="Proton donor/acceptor" evidence="1">
    <location>
        <position position="146"/>
    </location>
</feature>
<feature type="binding site" evidence="1">
    <location>
        <position position="8"/>
    </location>
    <ligand>
        <name>Mg(2+)</name>
        <dbReference type="ChEBI" id="CHEBI:18420"/>
    </ligand>
</feature>
<feature type="binding site" evidence="1">
    <location>
        <position position="15"/>
    </location>
    <ligand>
        <name>ATP</name>
        <dbReference type="ChEBI" id="CHEBI:30616"/>
    </ligand>
</feature>
<feature type="binding site" evidence="1">
    <location>
        <position position="89"/>
    </location>
    <ligand>
        <name>substrate</name>
    </ligand>
</feature>
<feature type="binding site" evidence="1">
    <location>
        <begin position="206"/>
        <end position="210"/>
    </location>
    <ligand>
        <name>ATP</name>
        <dbReference type="ChEBI" id="CHEBI:30616"/>
    </ligand>
</feature>
<feature type="binding site" evidence="1">
    <location>
        <begin position="281"/>
        <end position="283"/>
    </location>
    <ligand>
        <name>ATP</name>
        <dbReference type="ChEBI" id="CHEBI:30616"/>
    </ligand>
</feature>
<feature type="binding site" evidence="1">
    <location>
        <begin position="329"/>
        <end position="333"/>
    </location>
    <ligand>
        <name>ATP</name>
        <dbReference type="ChEBI" id="CHEBI:30616"/>
    </ligand>
</feature>
<feature type="binding site" evidence="1">
    <location>
        <position position="382"/>
    </location>
    <ligand>
        <name>Mg(2+)</name>
        <dbReference type="ChEBI" id="CHEBI:18420"/>
    </ligand>
</feature>
<feature type="site" description="Transition state stabilizer" evidence="1">
    <location>
        <position position="178"/>
    </location>
</feature>
<feature type="site" description="Transition state stabilizer" evidence="1">
    <location>
        <position position="239"/>
    </location>
</feature>
<name>ACKA2_LISMF</name>
<keyword id="KW-0067">ATP-binding</keyword>
<keyword id="KW-0963">Cytoplasm</keyword>
<keyword id="KW-0418">Kinase</keyword>
<keyword id="KW-0460">Magnesium</keyword>
<keyword id="KW-0479">Metal-binding</keyword>
<keyword id="KW-0547">Nucleotide-binding</keyword>
<keyword id="KW-0808">Transferase</keyword>
<evidence type="ECO:0000255" key="1">
    <source>
        <dbReference type="HAMAP-Rule" id="MF_00020"/>
    </source>
</evidence>
<gene>
    <name evidence="1" type="primary">ackA2</name>
    <name type="ordered locus">LMOf2365_1603</name>
</gene>
<organism>
    <name type="scientific">Listeria monocytogenes serotype 4b (strain F2365)</name>
    <dbReference type="NCBI Taxonomy" id="265669"/>
    <lineage>
        <taxon>Bacteria</taxon>
        <taxon>Bacillati</taxon>
        <taxon>Bacillota</taxon>
        <taxon>Bacilli</taxon>
        <taxon>Bacillales</taxon>
        <taxon>Listeriaceae</taxon>
        <taxon>Listeria</taxon>
    </lineage>
</organism>
<accession>Q71Z86</accession>
<sequence>MEKTIAINAGSSSLKFQLYDMPSERVITAGIVERIGLKDSIFTITVDGEKIKEIIDIPDHEIAVQMLLEKLINHKVIGSYDEITGIGHRVVHGGERFPESVYIDDQVIKDIEALSELAPLHNPANVTGIKAFRKILPDVVSVAVFDTAFHQTMPPASYLYSLPYSYYEDYGIRKYGFHGTSHKYVSERAAELLGRPVEELRLLTCHLGNGASIAAIEGGKSMDTSMGFTPLAGVSMGTRSGNIDPALIPFIMEKTGKTAEQVLDVLNKESGMLGVSGISSDLRDLEDEAAKGNDRAELALQVFVDRIHKYIGSYAARMNGVDAIIFTAGIGENSSYIREKVLRGLEFMGVYWDPALNQVRGEERFLNYPHSPVKVIIIPTNEELMIARDVETIKNNH</sequence>